<proteinExistence type="inferred from homology"/>
<dbReference type="EMBL" id="CM000157">
    <property type="protein sequence ID" value="EDW89792.1"/>
    <property type="status" value="ALT_INIT"/>
    <property type="molecule type" value="Genomic_DNA"/>
</dbReference>
<dbReference type="RefSeq" id="XP_002090080.1">
    <property type="nucleotide sequence ID" value="XM_002090044.2"/>
</dbReference>
<dbReference type="SMR" id="B4NYU1"/>
<dbReference type="EnsemblMetazoa" id="FBtr0401666">
    <property type="protein sequence ID" value="FBpp0360568"/>
    <property type="gene ID" value="FBgn0238048"/>
</dbReference>
<dbReference type="EnsemblMetazoa" id="XM_015198708.2">
    <property type="protein sequence ID" value="XP_015054194.1"/>
    <property type="gene ID" value="LOC6529049"/>
</dbReference>
<dbReference type="eggNOG" id="KOG2975">
    <property type="taxonomic scope" value="Eukaryota"/>
</dbReference>
<dbReference type="OrthoDB" id="25498at2759"/>
<dbReference type="Proteomes" id="UP000002282">
    <property type="component" value="Chromosome 2L"/>
</dbReference>
<dbReference type="GO" id="GO:0016282">
    <property type="term" value="C:eukaryotic 43S preinitiation complex"/>
    <property type="evidence" value="ECO:0007669"/>
    <property type="project" value="UniProtKB-UniRule"/>
</dbReference>
<dbReference type="GO" id="GO:0033290">
    <property type="term" value="C:eukaryotic 48S preinitiation complex"/>
    <property type="evidence" value="ECO:0007669"/>
    <property type="project" value="UniProtKB-UniRule"/>
</dbReference>
<dbReference type="GO" id="GO:0071541">
    <property type="term" value="C:eukaryotic translation initiation factor 3 complex, eIF3m"/>
    <property type="evidence" value="ECO:0007669"/>
    <property type="project" value="TreeGrafter"/>
</dbReference>
<dbReference type="GO" id="GO:0008237">
    <property type="term" value="F:metallopeptidase activity"/>
    <property type="evidence" value="ECO:0007669"/>
    <property type="project" value="InterPro"/>
</dbReference>
<dbReference type="GO" id="GO:0003743">
    <property type="term" value="F:translation initiation factor activity"/>
    <property type="evidence" value="ECO:0007669"/>
    <property type="project" value="UniProtKB-UniRule"/>
</dbReference>
<dbReference type="GO" id="GO:0031369">
    <property type="term" value="F:translation initiation factor binding"/>
    <property type="evidence" value="ECO:0007669"/>
    <property type="project" value="InterPro"/>
</dbReference>
<dbReference type="GO" id="GO:0001732">
    <property type="term" value="P:formation of cytoplasmic translation initiation complex"/>
    <property type="evidence" value="ECO:0007669"/>
    <property type="project" value="UniProtKB-UniRule"/>
</dbReference>
<dbReference type="CDD" id="cd08064">
    <property type="entry name" value="MPN_eIF3f"/>
    <property type="match status" value="1"/>
</dbReference>
<dbReference type="Gene3D" id="3.40.140.10">
    <property type="entry name" value="Cytidine Deaminase, domain 2"/>
    <property type="match status" value="1"/>
</dbReference>
<dbReference type="HAMAP" id="MF_03005">
    <property type="entry name" value="eIF3f"/>
    <property type="match status" value="1"/>
</dbReference>
<dbReference type="InterPro" id="IPR027531">
    <property type="entry name" value="eIF3f"/>
</dbReference>
<dbReference type="InterPro" id="IPR024969">
    <property type="entry name" value="EIF3F/CSN6-like_C"/>
</dbReference>
<dbReference type="InterPro" id="IPR000555">
    <property type="entry name" value="JAMM/MPN+_dom"/>
</dbReference>
<dbReference type="InterPro" id="IPR037518">
    <property type="entry name" value="MPN"/>
</dbReference>
<dbReference type="PANTHER" id="PTHR10540:SF6">
    <property type="entry name" value="EUKARYOTIC TRANSLATION INITIATION FACTOR 3 SUBUNIT F"/>
    <property type="match status" value="1"/>
</dbReference>
<dbReference type="PANTHER" id="PTHR10540">
    <property type="entry name" value="EUKARYOTIC TRANSLATION INITIATION FACTOR 3 SUBUNIT F-RELATED"/>
    <property type="match status" value="1"/>
</dbReference>
<dbReference type="Pfam" id="PF01398">
    <property type="entry name" value="JAB"/>
    <property type="match status" value="1"/>
</dbReference>
<dbReference type="Pfam" id="PF13012">
    <property type="entry name" value="MitMem_reg"/>
    <property type="match status" value="1"/>
</dbReference>
<dbReference type="SMART" id="SM00232">
    <property type="entry name" value="JAB_MPN"/>
    <property type="match status" value="1"/>
</dbReference>
<dbReference type="PROSITE" id="PS50249">
    <property type="entry name" value="MPN"/>
    <property type="match status" value="1"/>
</dbReference>
<protein>
    <recommendedName>
        <fullName evidence="1">Eukaryotic translation initiation factor 3 subunit F-2</fullName>
        <shortName evidence="1">eIF3f-2</shortName>
    </recommendedName>
    <alternativeName>
        <fullName evidence="1">Eukaryotic translation initiation factor 3 subunit 5-2</fullName>
    </alternativeName>
</protein>
<comment type="function">
    <text evidence="1">Component of the eukaryotic translation initiation factor 3 (eIF-3) complex, which is involved in protein synthesis of a specialized repertoire of mRNAs and, together with other initiation factors, stimulates binding of mRNA and methionyl-tRNAi to the 40S ribosome. The eIF-3 complex specifically targets and initiates translation of a subset of mRNAs involved in cell proliferation.</text>
</comment>
<comment type="subunit">
    <text evidence="1">Component of the eukaryotic translation initiation factor 3 (eIF-3) complex. The eIF-3 complex interacts with pix.</text>
</comment>
<comment type="subcellular location">
    <subcellularLocation>
        <location evidence="1">Cytoplasm</location>
    </subcellularLocation>
</comment>
<comment type="similarity">
    <text evidence="1">Belongs to the eIF-3 subunit F family.</text>
</comment>
<comment type="sequence caution" evidence="3">
    <conflict type="erroneous initiation">
        <sequence resource="EMBL-CDS" id="EDW89792"/>
    </conflict>
</comment>
<evidence type="ECO:0000255" key="1">
    <source>
        <dbReference type="HAMAP-Rule" id="MF_03005"/>
    </source>
</evidence>
<evidence type="ECO:0000255" key="2">
    <source>
        <dbReference type="PROSITE-ProRule" id="PRU01182"/>
    </source>
</evidence>
<evidence type="ECO:0000305" key="3"/>
<gene>
    <name evidence="1" type="primary">eIF3f2</name>
    <name evidence="1" type="synonym">eIF3-S5-2</name>
    <name type="ORF">GE20747</name>
</gene>
<reference key="1">
    <citation type="journal article" date="2007" name="Nature">
        <title>Evolution of genes and genomes on the Drosophila phylogeny.</title>
        <authorList>
            <consortium name="Drosophila 12 genomes consortium"/>
        </authorList>
    </citation>
    <scope>NUCLEOTIDE SEQUENCE [LARGE SCALE GENOMIC DNA]</scope>
    <source>
        <strain>Tai18E2 / Tucson 14021-0261.01</strain>
    </source>
</reference>
<name>EI3F2_DROYA</name>
<sequence length="285" mass="32475">MSRNFSMQAKVFIKPLVLFQIIDAYERRPKGDNQVMGTLLGRNKEGHFEITNCFPVPHKEHPEINRIDLDISYASEFLELNMLTYSNERVLGWFSTGKSVSRSASLLHDYYARECGEIQPVHLVMDATLKSQRLSTRLYCAVEIGVPGGTKGLMFSLVPLEISNGNSDLVALRSLEKQSLQQGTKQMERFLPELVQVVDATRDIQQRLDLVLRYINDVLARKRKPDNVIGRALYAALTAVPLLDSEKFRLMFNTNLRDMLMAITLSTMIKTQLEISEKLSCMQDQ</sequence>
<feature type="chain" id="PRO_0000364320" description="Eukaryotic translation initiation factor 3 subunit F-2">
    <location>
        <begin position="1"/>
        <end position="285"/>
    </location>
</feature>
<feature type="domain" description="MPN" evidence="2">
    <location>
        <begin position="11"/>
        <end position="145"/>
    </location>
</feature>
<organism>
    <name type="scientific">Drosophila yakuba</name>
    <name type="common">Fruit fly</name>
    <dbReference type="NCBI Taxonomy" id="7245"/>
    <lineage>
        <taxon>Eukaryota</taxon>
        <taxon>Metazoa</taxon>
        <taxon>Ecdysozoa</taxon>
        <taxon>Arthropoda</taxon>
        <taxon>Hexapoda</taxon>
        <taxon>Insecta</taxon>
        <taxon>Pterygota</taxon>
        <taxon>Neoptera</taxon>
        <taxon>Endopterygota</taxon>
        <taxon>Diptera</taxon>
        <taxon>Brachycera</taxon>
        <taxon>Muscomorpha</taxon>
        <taxon>Ephydroidea</taxon>
        <taxon>Drosophilidae</taxon>
        <taxon>Drosophila</taxon>
        <taxon>Sophophora</taxon>
    </lineage>
</organism>
<accession>B4NYU1</accession>
<keyword id="KW-0963">Cytoplasm</keyword>
<keyword id="KW-0396">Initiation factor</keyword>
<keyword id="KW-0648">Protein biosynthesis</keyword>